<accession>B7KJP7</accession>
<reference key="1">
    <citation type="journal article" date="2011" name="MBio">
        <title>Novel metabolic attributes of the genus Cyanothece, comprising a group of unicellular nitrogen-fixing Cyanobacteria.</title>
        <authorList>
            <person name="Bandyopadhyay A."/>
            <person name="Elvitigala T."/>
            <person name="Welsh E."/>
            <person name="Stockel J."/>
            <person name="Liberton M."/>
            <person name="Min H."/>
            <person name="Sherman L.A."/>
            <person name="Pakrasi H.B."/>
        </authorList>
    </citation>
    <scope>NUCLEOTIDE SEQUENCE [LARGE SCALE GENOMIC DNA]</scope>
    <source>
        <strain>PCC 7424</strain>
    </source>
</reference>
<comment type="function">
    <text evidence="1">Catalyzes the reversible formation of acyl-phosphate (acyl-PO(4)) from acyl-[acyl-carrier-protein] (acyl-ACP). This enzyme utilizes acyl-ACP as fatty acyl donor, but not acyl-CoA.</text>
</comment>
<comment type="catalytic activity">
    <reaction evidence="1">
        <text>a fatty acyl-[ACP] + phosphate = an acyl phosphate + holo-[ACP]</text>
        <dbReference type="Rhea" id="RHEA:42292"/>
        <dbReference type="Rhea" id="RHEA-COMP:9685"/>
        <dbReference type="Rhea" id="RHEA-COMP:14125"/>
        <dbReference type="ChEBI" id="CHEBI:43474"/>
        <dbReference type="ChEBI" id="CHEBI:59918"/>
        <dbReference type="ChEBI" id="CHEBI:64479"/>
        <dbReference type="ChEBI" id="CHEBI:138651"/>
        <dbReference type="EC" id="2.3.1.274"/>
    </reaction>
</comment>
<comment type="pathway">
    <text evidence="1">Lipid metabolism; phospholipid metabolism.</text>
</comment>
<comment type="subunit">
    <text evidence="1">Homodimer. Probably interacts with PlsY.</text>
</comment>
<comment type="subcellular location">
    <subcellularLocation>
        <location evidence="1">Cytoplasm</location>
    </subcellularLocation>
    <text evidence="1">Associated with the membrane possibly through PlsY.</text>
</comment>
<comment type="similarity">
    <text evidence="1">Belongs to the PlsX family.</text>
</comment>
<dbReference type="EC" id="2.3.1.274" evidence="1"/>
<dbReference type="EMBL" id="CP001291">
    <property type="protein sequence ID" value="ACK69496.1"/>
    <property type="molecule type" value="Genomic_DNA"/>
</dbReference>
<dbReference type="RefSeq" id="WP_012598442.1">
    <property type="nucleotide sequence ID" value="NC_011729.1"/>
</dbReference>
<dbReference type="SMR" id="B7KJP7"/>
<dbReference type="STRING" id="65393.PCC7424_1042"/>
<dbReference type="KEGG" id="cyc:PCC7424_1042"/>
<dbReference type="eggNOG" id="COG0416">
    <property type="taxonomic scope" value="Bacteria"/>
</dbReference>
<dbReference type="HOGENOM" id="CLU_039379_1_1_3"/>
<dbReference type="OrthoDB" id="9806408at2"/>
<dbReference type="UniPathway" id="UPA00085"/>
<dbReference type="Proteomes" id="UP000002384">
    <property type="component" value="Chromosome"/>
</dbReference>
<dbReference type="GO" id="GO:0005737">
    <property type="term" value="C:cytoplasm"/>
    <property type="evidence" value="ECO:0007669"/>
    <property type="project" value="UniProtKB-SubCell"/>
</dbReference>
<dbReference type="GO" id="GO:0043811">
    <property type="term" value="F:phosphate:acyl-[acyl carrier protein] acyltransferase activity"/>
    <property type="evidence" value="ECO:0007669"/>
    <property type="project" value="UniProtKB-UniRule"/>
</dbReference>
<dbReference type="GO" id="GO:0006633">
    <property type="term" value="P:fatty acid biosynthetic process"/>
    <property type="evidence" value="ECO:0007669"/>
    <property type="project" value="UniProtKB-UniRule"/>
</dbReference>
<dbReference type="GO" id="GO:0008654">
    <property type="term" value="P:phospholipid biosynthetic process"/>
    <property type="evidence" value="ECO:0007669"/>
    <property type="project" value="UniProtKB-KW"/>
</dbReference>
<dbReference type="Gene3D" id="3.40.718.10">
    <property type="entry name" value="Isopropylmalate Dehydrogenase"/>
    <property type="match status" value="1"/>
</dbReference>
<dbReference type="HAMAP" id="MF_00019">
    <property type="entry name" value="PlsX"/>
    <property type="match status" value="1"/>
</dbReference>
<dbReference type="InterPro" id="IPR003664">
    <property type="entry name" value="FA_synthesis"/>
</dbReference>
<dbReference type="InterPro" id="IPR012281">
    <property type="entry name" value="Phospholipid_synth_PlsX-like"/>
</dbReference>
<dbReference type="NCBIfam" id="TIGR00182">
    <property type="entry name" value="plsX"/>
    <property type="match status" value="1"/>
</dbReference>
<dbReference type="PANTHER" id="PTHR30100">
    <property type="entry name" value="FATTY ACID/PHOSPHOLIPID SYNTHESIS PROTEIN PLSX"/>
    <property type="match status" value="1"/>
</dbReference>
<dbReference type="PANTHER" id="PTHR30100:SF1">
    <property type="entry name" value="PHOSPHATE ACYLTRANSFERASE"/>
    <property type="match status" value="1"/>
</dbReference>
<dbReference type="Pfam" id="PF02504">
    <property type="entry name" value="FA_synthesis"/>
    <property type="match status" value="1"/>
</dbReference>
<dbReference type="PIRSF" id="PIRSF002465">
    <property type="entry name" value="Phsphlp_syn_PlsX"/>
    <property type="match status" value="1"/>
</dbReference>
<dbReference type="SUPFAM" id="SSF53659">
    <property type="entry name" value="Isocitrate/Isopropylmalate dehydrogenase-like"/>
    <property type="match status" value="1"/>
</dbReference>
<organism>
    <name type="scientific">Gloeothece citriformis (strain PCC 7424)</name>
    <name type="common">Cyanothece sp. (strain PCC 7424)</name>
    <dbReference type="NCBI Taxonomy" id="65393"/>
    <lineage>
        <taxon>Bacteria</taxon>
        <taxon>Bacillati</taxon>
        <taxon>Cyanobacteriota</taxon>
        <taxon>Cyanophyceae</taxon>
        <taxon>Oscillatoriophycideae</taxon>
        <taxon>Chroococcales</taxon>
        <taxon>Aphanothecaceae</taxon>
        <taxon>Gloeothece</taxon>
        <taxon>Gloeothece citriformis</taxon>
    </lineage>
</organism>
<sequence length="351" mass="37795">MASSRARIAVDAMGGDYAPDEIIAGAIRASAELEVDVLLVGDSHRIESYLQQHHKPINVEIIHAEEVIAMDEEPLSAIRRKSKASINVAMDLVKEKRADAVVSAGHSGAAMASALLRLGRLKGIDRPAIGAVFPTILAGKSVIVLDVGANVDSRPKYLEQFALMGTIYSKYVLGIEEPKVGLLNIGEESSKGNDLALRTYQLLEANESIPFVGNAEGRDVLSGHFDVIVCDGFVGNVLLKFAEAVGEVMLQIIREELPQGLRGQLGTALLKPNLKRLKQRIDHAEHGGGLLFGVAGVCIISHGSSQAPSIFNAIRLAQDAINNQVLERIQAYNEQHQQESQNSTETVTSEQ</sequence>
<keyword id="KW-0963">Cytoplasm</keyword>
<keyword id="KW-0444">Lipid biosynthesis</keyword>
<keyword id="KW-0443">Lipid metabolism</keyword>
<keyword id="KW-0594">Phospholipid biosynthesis</keyword>
<keyword id="KW-1208">Phospholipid metabolism</keyword>
<keyword id="KW-1185">Reference proteome</keyword>
<keyword id="KW-0808">Transferase</keyword>
<gene>
    <name evidence="1" type="primary">plsX</name>
    <name type="ordered locus">PCC7424_1042</name>
</gene>
<evidence type="ECO:0000255" key="1">
    <source>
        <dbReference type="HAMAP-Rule" id="MF_00019"/>
    </source>
</evidence>
<proteinExistence type="inferred from homology"/>
<protein>
    <recommendedName>
        <fullName evidence="1">Phosphate acyltransferase</fullName>
        <ecNumber evidence="1">2.3.1.274</ecNumber>
    </recommendedName>
    <alternativeName>
        <fullName evidence="1">Acyl-ACP phosphotransacylase</fullName>
    </alternativeName>
    <alternativeName>
        <fullName evidence="1">Acyl-[acyl-carrier-protein]--phosphate acyltransferase</fullName>
    </alternativeName>
    <alternativeName>
        <fullName evidence="1">Phosphate-acyl-ACP acyltransferase</fullName>
    </alternativeName>
</protein>
<name>PLSX_GLOC7</name>
<feature type="chain" id="PRO_1000116374" description="Phosphate acyltransferase">
    <location>
        <begin position="1"/>
        <end position="351"/>
    </location>
</feature>